<evidence type="ECO:0000255" key="1">
    <source>
        <dbReference type="HAMAP-Rule" id="MF_00918"/>
    </source>
</evidence>
<feature type="chain" id="PRO_1000132243" description="Probable transcriptional regulatory protein Spy49_0265">
    <location>
        <begin position="1"/>
        <end position="238"/>
    </location>
</feature>
<dbReference type="EMBL" id="CP000829">
    <property type="protein sequence ID" value="ACI60604.1"/>
    <property type="molecule type" value="Genomic_DNA"/>
</dbReference>
<dbReference type="SMR" id="B5XJU2"/>
<dbReference type="KEGG" id="soz:Spy49_0265"/>
<dbReference type="HOGENOM" id="CLU_062974_2_0_9"/>
<dbReference type="Proteomes" id="UP000001039">
    <property type="component" value="Chromosome"/>
</dbReference>
<dbReference type="GO" id="GO:0005829">
    <property type="term" value="C:cytosol"/>
    <property type="evidence" value="ECO:0007669"/>
    <property type="project" value="TreeGrafter"/>
</dbReference>
<dbReference type="GO" id="GO:0003677">
    <property type="term" value="F:DNA binding"/>
    <property type="evidence" value="ECO:0007669"/>
    <property type="project" value="UniProtKB-UniRule"/>
</dbReference>
<dbReference type="GO" id="GO:0006355">
    <property type="term" value="P:regulation of DNA-templated transcription"/>
    <property type="evidence" value="ECO:0007669"/>
    <property type="project" value="UniProtKB-UniRule"/>
</dbReference>
<dbReference type="FunFam" id="1.10.10.200:FF:000003">
    <property type="entry name" value="Probable transcriptional regulatory protein YeeN"/>
    <property type="match status" value="1"/>
</dbReference>
<dbReference type="FunFam" id="3.30.70.980:FF:000004">
    <property type="entry name" value="Probable transcriptional regulatory protein YeeN"/>
    <property type="match status" value="1"/>
</dbReference>
<dbReference type="Gene3D" id="1.10.10.200">
    <property type="match status" value="1"/>
</dbReference>
<dbReference type="Gene3D" id="3.30.70.980">
    <property type="match status" value="2"/>
</dbReference>
<dbReference type="HAMAP" id="MF_00693">
    <property type="entry name" value="Transcrip_reg_TACO1"/>
    <property type="match status" value="1"/>
</dbReference>
<dbReference type="HAMAP" id="MF_00918">
    <property type="entry name" value="Transcrip_reg_TACO1_YeeN"/>
    <property type="match status" value="1"/>
</dbReference>
<dbReference type="InterPro" id="IPR017856">
    <property type="entry name" value="Integrase-like_N"/>
</dbReference>
<dbReference type="InterPro" id="IPR048300">
    <property type="entry name" value="TACO1_YebC-like_2nd/3rd_dom"/>
</dbReference>
<dbReference type="InterPro" id="IPR049083">
    <property type="entry name" value="TACO1_YebC_N"/>
</dbReference>
<dbReference type="InterPro" id="IPR002876">
    <property type="entry name" value="Transcrip_reg_TACO1-like"/>
</dbReference>
<dbReference type="InterPro" id="IPR026564">
    <property type="entry name" value="Transcrip_reg_TACO1-like_dom3"/>
</dbReference>
<dbReference type="InterPro" id="IPR026562">
    <property type="entry name" value="Transcrip_reg_TACO1_YeeN"/>
</dbReference>
<dbReference type="InterPro" id="IPR029072">
    <property type="entry name" value="YebC-like"/>
</dbReference>
<dbReference type="NCBIfam" id="NF001030">
    <property type="entry name" value="PRK00110.1"/>
    <property type="match status" value="1"/>
</dbReference>
<dbReference type="NCBIfam" id="NF009044">
    <property type="entry name" value="PRK12378.1"/>
    <property type="match status" value="1"/>
</dbReference>
<dbReference type="NCBIfam" id="TIGR01033">
    <property type="entry name" value="YebC/PmpR family DNA-binding transcriptional regulator"/>
    <property type="match status" value="1"/>
</dbReference>
<dbReference type="PANTHER" id="PTHR12532">
    <property type="entry name" value="TRANSLATIONAL ACTIVATOR OF CYTOCHROME C OXIDASE 1"/>
    <property type="match status" value="1"/>
</dbReference>
<dbReference type="PANTHER" id="PTHR12532:SF0">
    <property type="entry name" value="TRANSLATIONAL ACTIVATOR OF CYTOCHROME C OXIDASE 1"/>
    <property type="match status" value="1"/>
</dbReference>
<dbReference type="Pfam" id="PF20772">
    <property type="entry name" value="TACO1_YebC_N"/>
    <property type="match status" value="1"/>
</dbReference>
<dbReference type="Pfam" id="PF01709">
    <property type="entry name" value="Transcrip_reg"/>
    <property type="match status" value="1"/>
</dbReference>
<dbReference type="SUPFAM" id="SSF75625">
    <property type="entry name" value="YebC-like"/>
    <property type="match status" value="1"/>
</dbReference>
<accession>B5XJU2</accession>
<gene>
    <name type="ordered locus">Spy49_0265</name>
</gene>
<protein>
    <recommendedName>
        <fullName evidence="1">Probable transcriptional regulatory protein Spy49_0265</fullName>
    </recommendedName>
</protein>
<reference key="1">
    <citation type="journal article" date="2008" name="J. Bacteriol.">
        <title>Genome sequence of a nephritogenic and highly transformable M49 strain of Streptococcus pyogenes.</title>
        <authorList>
            <person name="McShan W.M."/>
            <person name="Ferretti J.J."/>
            <person name="Karasawa T."/>
            <person name="Suvorov A.N."/>
            <person name="Lin S."/>
            <person name="Qin B."/>
            <person name="Jia H."/>
            <person name="Kenton S."/>
            <person name="Najar F."/>
            <person name="Wu H."/>
            <person name="Scott J."/>
            <person name="Roe B.A."/>
            <person name="Savic D.J."/>
        </authorList>
    </citation>
    <scope>NUCLEOTIDE SEQUENCE [LARGE SCALE GENOMIC DNA]</scope>
    <source>
        <strain>NZ131</strain>
    </source>
</reference>
<proteinExistence type="inferred from homology"/>
<organism>
    <name type="scientific">Streptococcus pyogenes serotype M49 (strain NZ131)</name>
    <dbReference type="NCBI Taxonomy" id="471876"/>
    <lineage>
        <taxon>Bacteria</taxon>
        <taxon>Bacillati</taxon>
        <taxon>Bacillota</taxon>
        <taxon>Bacilli</taxon>
        <taxon>Lactobacillales</taxon>
        <taxon>Streptococcaceae</taxon>
        <taxon>Streptococcus</taxon>
    </lineage>
</organism>
<sequence>MGRKWANIVAKKTAKDGATSKVYAKFGVEIYVAAKQGEPDPELNTALKFVIDRAKQAQVPKHVIDKAIDKAKGNTDETFVEGRYEGFGPNGSMIIVDTLTSNVNRTAANVRTAYGKNGGNMGASGSVSYLFDKKGVIVFAGDDADSVFEQLLEADVDVDDVEAEEGTITVYTAPTDLHKGIQALRDNGVEEFQVTELEMIPQSEVVLEGDDLETFEKLIDALESDDDVQKVYHNVADF</sequence>
<comment type="subcellular location">
    <subcellularLocation>
        <location evidence="1">Cytoplasm</location>
    </subcellularLocation>
</comment>
<comment type="similarity">
    <text evidence="1">Belongs to the TACO1 family. YeeN subfamily.</text>
</comment>
<name>Y265_STRPZ</name>
<keyword id="KW-0963">Cytoplasm</keyword>
<keyword id="KW-0238">DNA-binding</keyword>
<keyword id="KW-0804">Transcription</keyword>
<keyword id="KW-0805">Transcription regulation</keyword>